<gene>
    <name evidence="15" type="primary">GL2</name>
    <name evidence="16" type="synonym">ATHB10</name>
    <name evidence="21" type="ordered locus">At1g79840</name>
    <name evidence="22" type="ORF">F19K16.20</name>
</gene>
<feature type="chain" id="PRO_0000048928" description="Homeobox-leucine zipper protein GLABRA 2">
    <location>
        <begin position="1"/>
        <end position="747"/>
    </location>
</feature>
<feature type="domain" description="START" evidence="3">
    <location>
        <begin position="250"/>
        <end position="489"/>
    </location>
</feature>
<feature type="DNA-binding region" description="Homeobox" evidence="2">
    <location>
        <begin position="101"/>
        <end position="160"/>
    </location>
</feature>
<feature type="region of interest" description="Disordered" evidence="4">
    <location>
        <begin position="31"/>
        <end position="112"/>
    </location>
</feature>
<feature type="coiled-coil region" evidence="1">
    <location>
        <begin position="155"/>
        <end position="223"/>
    </location>
</feature>
<feature type="compositionally biased region" description="Polar residues" evidence="4">
    <location>
        <begin position="58"/>
        <end position="68"/>
    </location>
</feature>
<feature type="compositionally biased region" description="Acidic residues" evidence="4">
    <location>
        <begin position="73"/>
        <end position="90"/>
    </location>
</feature>
<feature type="compositionally biased region" description="Basic residues" evidence="4">
    <location>
        <begin position="97"/>
        <end position="107"/>
    </location>
</feature>
<reference key="1">
    <citation type="journal article" date="1994" name="Genes Dev.">
        <title>The GLABRA2 gene encodes a homeo domain protein required for normal trichome development in Arabidopsis.</title>
        <authorList>
            <person name="Rerie W.G."/>
            <person name="Feldmann K.A."/>
            <person name="Marks M.D."/>
        </authorList>
    </citation>
    <scope>NUCLEOTIDE SEQUENCE [GENOMIC DNA]</scope>
    <scope>FUNCTION</scope>
    <scope>TISSUE SPECIFICITY</scope>
    <scope>DISRUPTION PHENOTYPE</scope>
    <source>
        <strain>cv. Wassilewskija</strain>
        <tissue>Seedling</tissue>
    </source>
</reference>
<reference key="2">
    <citation type="submission" date="1996-11" db="EMBL/GenBank/DDBJ databases">
        <authorList>
            <person name="Marks M.D."/>
        </authorList>
    </citation>
    <scope>SEQUENCE REVISION</scope>
</reference>
<reference key="3">
    <citation type="journal article" date="1996" name="Plant J.">
        <title>The Arabidopsis Athb-10 (GLABRA2) is an HD-Zip protein required for regulation of root hair development.</title>
        <authorList>
            <person name="di Cristina M."/>
            <person name="Sessa G."/>
            <person name="Dolan L."/>
            <person name="Linstead P."/>
            <person name="Baima S."/>
            <person name="Ruberti I."/>
            <person name="Morelli G."/>
        </authorList>
    </citation>
    <scope>NUCLEOTIDE SEQUENCE [GENOMIC DNA]</scope>
    <scope>FUNCTION</scope>
    <source>
        <strain>cv. Columbia</strain>
    </source>
</reference>
<reference key="4">
    <citation type="submission" date="2002-04" db="EMBL/GenBank/DDBJ databases">
        <title>Nucleotide sequence of the Arabidopsis ATHB-10/GL2 mRNA, encoding an HD-Zip IV protein.</title>
        <authorList>
            <person name="Sessa G."/>
            <person name="Carabelli M."/>
            <person name="Ciarbelli A.R."/>
            <person name="Ruzza V."/>
            <person name="Steindler C."/>
            <person name="Ruberti I."/>
        </authorList>
    </citation>
    <scope>NUCLEOTIDE SEQUENCE [MRNA]</scope>
    <source>
        <strain>cv. Columbia</strain>
    </source>
</reference>
<reference key="5">
    <citation type="journal article" date="2000" name="Nature">
        <title>Sequence and analysis of chromosome 1 of the plant Arabidopsis thaliana.</title>
        <authorList>
            <person name="Theologis A."/>
            <person name="Ecker J.R."/>
            <person name="Palm C.J."/>
            <person name="Federspiel N.A."/>
            <person name="Kaul S."/>
            <person name="White O."/>
            <person name="Alonso J."/>
            <person name="Altafi H."/>
            <person name="Araujo R."/>
            <person name="Bowman C.L."/>
            <person name="Brooks S.Y."/>
            <person name="Buehler E."/>
            <person name="Chan A."/>
            <person name="Chao Q."/>
            <person name="Chen H."/>
            <person name="Cheuk R.F."/>
            <person name="Chin C.W."/>
            <person name="Chung M.K."/>
            <person name="Conn L."/>
            <person name="Conway A.B."/>
            <person name="Conway A.R."/>
            <person name="Creasy T.H."/>
            <person name="Dewar K."/>
            <person name="Dunn P."/>
            <person name="Etgu P."/>
            <person name="Feldblyum T.V."/>
            <person name="Feng J.-D."/>
            <person name="Fong B."/>
            <person name="Fujii C.Y."/>
            <person name="Gill J.E."/>
            <person name="Goldsmith A.D."/>
            <person name="Haas B."/>
            <person name="Hansen N.F."/>
            <person name="Hughes B."/>
            <person name="Huizar L."/>
            <person name="Hunter J.L."/>
            <person name="Jenkins J."/>
            <person name="Johnson-Hopson C."/>
            <person name="Khan S."/>
            <person name="Khaykin E."/>
            <person name="Kim C.J."/>
            <person name="Koo H.L."/>
            <person name="Kremenetskaia I."/>
            <person name="Kurtz D.B."/>
            <person name="Kwan A."/>
            <person name="Lam B."/>
            <person name="Langin-Hooper S."/>
            <person name="Lee A."/>
            <person name="Lee J.M."/>
            <person name="Lenz C.A."/>
            <person name="Li J.H."/>
            <person name="Li Y.-P."/>
            <person name="Lin X."/>
            <person name="Liu S.X."/>
            <person name="Liu Z.A."/>
            <person name="Luros J.S."/>
            <person name="Maiti R."/>
            <person name="Marziali A."/>
            <person name="Militscher J."/>
            <person name="Miranda M."/>
            <person name="Nguyen M."/>
            <person name="Nierman W.C."/>
            <person name="Osborne B.I."/>
            <person name="Pai G."/>
            <person name="Peterson J."/>
            <person name="Pham P.K."/>
            <person name="Rizzo M."/>
            <person name="Rooney T."/>
            <person name="Rowley D."/>
            <person name="Sakano H."/>
            <person name="Salzberg S.L."/>
            <person name="Schwartz J.R."/>
            <person name="Shinn P."/>
            <person name="Southwick A.M."/>
            <person name="Sun H."/>
            <person name="Tallon L.J."/>
            <person name="Tambunga G."/>
            <person name="Toriumi M.J."/>
            <person name="Town C.D."/>
            <person name="Utterback T."/>
            <person name="Van Aken S."/>
            <person name="Vaysberg M."/>
            <person name="Vysotskaia V.S."/>
            <person name="Walker M."/>
            <person name="Wu D."/>
            <person name="Yu G."/>
            <person name="Fraser C.M."/>
            <person name="Venter J.C."/>
            <person name="Davis R.W."/>
        </authorList>
    </citation>
    <scope>NUCLEOTIDE SEQUENCE [LARGE SCALE GENOMIC DNA]</scope>
    <source>
        <strain>cv. Columbia</strain>
    </source>
</reference>
<reference key="6">
    <citation type="journal article" date="2017" name="Plant J.">
        <title>Araport11: a complete reannotation of the Arabidopsis thaliana reference genome.</title>
        <authorList>
            <person name="Cheng C.Y."/>
            <person name="Krishnakumar V."/>
            <person name="Chan A.P."/>
            <person name="Thibaud-Nissen F."/>
            <person name="Schobel S."/>
            <person name="Town C.D."/>
        </authorList>
    </citation>
    <scope>GENOME REANNOTATION</scope>
    <source>
        <strain>cv. Columbia</strain>
    </source>
</reference>
<reference key="7">
    <citation type="journal article" date="2003" name="Science">
        <title>Empirical analysis of transcriptional activity in the Arabidopsis genome.</title>
        <authorList>
            <person name="Yamada K."/>
            <person name="Lim J."/>
            <person name="Dale J.M."/>
            <person name="Chen H."/>
            <person name="Shinn P."/>
            <person name="Palm C.J."/>
            <person name="Southwick A.M."/>
            <person name="Wu H.C."/>
            <person name="Kim C.J."/>
            <person name="Nguyen M."/>
            <person name="Pham P.K."/>
            <person name="Cheuk R.F."/>
            <person name="Karlin-Newmann G."/>
            <person name="Liu S.X."/>
            <person name="Lam B."/>
            <person name="Sakano H."/>
            <person name="Wu T."/>
            <person name="Yu G."/>
            <person name="Miranda M."/>
            <person name="Quach H.L."/>
            <person name="Tripp M."/>
            <person name="Chang C.H."/>
            <person name="Lee J.M."/>
            <person name="Toriumi M.J."/>
            <person name="Chan M.M."/>
            <person name="Tang C.C."/>
            <person name="Onodera C.S."/>
            <person name="Deng J.M."/>
            <person name="Akiyama K."/>
            <person name="Ansari Y."/>
            <person name="Arakawa T."/>
            <person name="Banh J."/>
            <person name="Banno F."/>
            <person name="Bowser L."/>
            <person name="Brooks S.Y."/>
            <person name="Carninci P."/>
            <person name="Chao Q."/>
            <person name="Choy N."/>
            <person name="Enju A."/>
            <person name="Goldsmith A.D."/>
            <person name="Gurjal M."/>
            <person name="Hansen N.F."/>
            <person name="Hayashizaki Y."/>
            <person name="Johnson-Hopson C."/>
            <person name="Hsuan V.W."/>
            <person name="Iida K."/>
            <person name="Karnes M."/>
            <person name="Khan S."/>
            <person name="Koesema E."/>
            <person name="Ishida J."/>
            <person name="Jiang P.X."/>
            <person name="Jones T."/>
            <person name="Kawai J."/>
            <person name="Kamiya A."/>
            <person name="Meyers C."/>
            <person name="Nakajima M."/>
            <person name="Narusaka M."/>
            <person name="Seki M."/>
            <person name="Sakurai T."/>
            <person name="Satou M."/>
            <person name="Tamse R."/>
            <person name="Vaysberg M."/>
            <person name="Wallender E.K."/>
            <person name="Wong C."/>
            <person name="Yamamura Y."/>
            <person name="Yuan S."/>
            <person name="Shinozaki K."/>
            <person name="Davis R.W."/>
            <person name="Theologis A."/>
            <person name="Ecker J.R."/>
        </authorList>
    </citation>
    <scope>NUCLEOTIDE SEQUENCE [LARGE SCALE MRNA]</scope>
    <source>
        <strain>cv. Columbia</strain>
    </source>
</reference>
<reference key="8">
    <citation type="journal article" date="1996" name="Development">
        <title>The homeobox gene GLABRA2 is required for position-dependent cell differentiation in the root epidermis of Arabidopsis thaliana.</title>
        <authorList>
            <person name="Masucci J.D."/>
            <person name="Rerie W.G."/>
            <person name="Foreman D.R."/>
            <person name="Zhang M."/>
            <person name="Galway M.E."/>
            <person name="Marks M.D."/>
            <person name="Schiefelbein J.W."/>
        </authorList>
    </citation>
    <scope>FUNCTION</scope>
    <scope>TISSUE SPECIFICITY</scope>
    <scope>DISRUPTION PHENOTYPE</scope>
</reference>
<reference key="9">
    <citation type="journal article" date="2000" name="Plant Mol. Biol.">
        <title>Organization and structural evolution of four multigene families in Arabidopsis thaliana: AtLCAD, AtLGT, AtMYST and AtHD-GL2.</title>
        <authorList>
            <person name="Tavares R."/>
            <person name="Aubourg S."/>
            <person name="Lecharny A."/>
            <person name="Kreis M."/>
        </authorList>
    </citation>
    <scope>GENE FAMILY</scope>
</reference>
<reference key="10">
    <citation type="journal article" date="2002" name="Plant J.">
        <title>Entopically additive expression of GLABRA2 alters the frequency and spacing of trichome initiation.</title>
        <authorList>
            <person name="Ohashi Y."/>
            <person name="Oka A."/>
            <person name="Ruberti I."/>
            <person name="Morelli G."/>
            <person name="Aoyama T."/>
        </authorList>
    </citation>
    <scope>FUNCTION</scope>
</reference>
<reference key="11">
    <citation type="journal article" date="2006" name="Plant Mol. Biol.">
        <title>The homeobox gene GLABRA2 affects seed oil content in Arabidopsis.</title>
        <authorList>
            <person name="Shen B."/>
            <person name="Sinkevicius K.W."/>
            <person name="Selinger D.A."/>
            <person name="Tarczynski M.C."/>
        </authorList>
    </citation>
    <scope>FUNCTION</scope>
    <scope>DISRUPTION PHENOTYPE</scope>
</reference>
<reference key="12">
    <citation type="journal article" date="2006" name="Plant Physiol.">
        <title>Characterization of the class IV homeodomain-leucine zipper gene family in Arabidopsis.</title>
        <authorList>
            <person name="Nakamura M."/>
            <person name="Katsumata H."/>
            <person name="Abe M."/>
            <person name="Yabe N."/>
            <person name="Komeda Y."/>
            <person name="Yamamoto K.T."/>
            <person name="Takahashi T."/>
        </authorList>
    </citation>
    <scope>GENE FAMILY</scope>
    <scope>NOMENCLATURE</scope>
</reference>
<reference key="13">
    <citation type="journal article" date="2007" name="Nature">
        <title>A chromatin link that couples cell division to root epidermis patterning in Arabidopsis.</title>
        <authorList>
            <person name="Caro E."/>
            <person name="Castellano M.M."/>
            <person name="Gutierrez C."/>
        </authorList>
    </citation>
    <scope>INDUCTION</scope>
</reference>
<reference key="14">
    <citation type="journal article" date="2012" name="Plant J.">
        <title>Arabidopsis glabra2 mutant seeds deficient in mucilage biosynthesis produce more oil.</title>
        <authorList>
            <person name="Shi L."/>
            <person name="Katavic V."/>
            <person name="Yu Y."/>
            <person name="Kunst L."/>
            <person name="Haughn G."/>
        </authorList>
    </citation>
    <scope>FUNCTION</scope>
    <scope>DISRUPTION PHENOTYPE</scope>
</reference>
<reference key="15">
    <citation type="journal article" date="2015" name="Plant Cell">
        <title>GLABRA2 directly suppresses basic helix-loop-helix transcription factor genes with diverse functions in root hair development.</title>
        <authorList>
            <person name="Lin Q."/>
            <person name="Ohashi Y."/>
            <person name="Kato M."/>
            <person name="Tsuge T."/>
            <person name="Gu H."/>
            <person name="Qu L.J."/>
            <person name="Aoyama T."/>
        </authorList>
    </citation>
    <scope>FUNCTION</scope>
</reference>
<reference key="16">
    <citation type="journal article" date="2015" name="Plant J.">
        <title>Characterization of an activation-tagged mutant uncovers a role of GLABRA2 in anthocyanin biosynthesis in Arabidopsis.</title>
        <authorList>
            <person name="Wang X."/>
            <person name="Wang X."/>
            <person name="Hu Q."/>
            <person name="Dai X."/>
            <person name="Tian H."/>
            <person name="Zheng K."/>
            <person name="Wang X."/>
            <person name="Mao T."/>
            <person name="Chen J.G."/>
            <person name="Wang S."/>
        </authorList>
    </citation>
    <scope>FUNCTION</scope>
</reference>
<reference key="17">
    <citation type="journal article" date="2017" name="Biochem. Biophys. Res. Commun.">
        <title>Adaptor proteins GIR1 and GIR2. I. Interaction with the repressor GLABRA2 and regulation of root hair development.</title>
        <authorList>
            <person name="Wu R."/>
            <person name="Citovsky V."/>
        </authorList>
    </citation>
    <scope>FUNCTION</scope>
    <scope>INTERACTION WITH GIR1 AND GIR2</scope>
    <scope>SUBCELLULAR LOCATION</scope>
    <scope>DISRUPTION PHENOTYPE</scope>
</reference>
<sequence length="747" mass="83207">MSMAVDMSSKQPTKDFFSSPALSLSLAGIFRNASSGSTNPEEDFLGRRVVDDEDRTVEMSSENSGPTRSRSEEDLEGEDHDDEEEEEEDGAAGNKGTNKRKRKKYHRHTTDQIRHMEALFKETPHPDEKQRQQLSKQLGLAPRQVKFWFQNRRTQIKAIQERHENSLLKAELEKLREENKAMRESFSKANSSCPNCGGGPDDLHLENSKLKAELDKLRAALGRTPYPLQASCSDDQEHRLGSLDFYTGVFALEKSRIAEISNRATLELQKMATSGEPMWLRSVETGREILNYDEYLKEFPQAQASSFPGRKTIEASRDAGIVFMDAHKLAQSFMDVGQWKETFACLISKAATVDVIRQGEGPSRIDGAIQLMFGEMQLLTPVVPTREVYFVRSCRQLSPEKWAIVDVSVSVEDSNTEKEASLLKCRKLPSGCIIEDTSNGHSKVTWVEHLDVSASTVQPLFRSLVNTGLAFGARHWVATLQLHCERLVFFMATNVPTKDSLGVTTLAGRKSVLKMAQRMTQSFYRAIAASSYHQWTKITTKTGQDMRVSSRKNLHDPGEPTGVIVCASSSLWLPVSPALLFDFFRDEARRHEWDALSNGAHVQSIANLSKGQDRGNSVAIQTVKSREKSIWVLQDSSTNSYESVVVYAPVDINTTQLVLAGHDPSNIQILPSGFSIIPDGVESRPLVITSTQDDRNSQGGSLLTLALQTLINPSPAAKLNMESVESVTNLVSVTLHNIKRSLQIEDC</sequence>
<accession>P46607</accession>
<accession>Q39018</accession>
<accession>Q9C5F1</accession>
<comment type="function">
    <text evidence="5 6 8 9 10 12 13 14 18 19 20">Transcription factor involved in the determination of epidermal cell identity (Probable). Required for correct morphological development and maturation of trichomes (PubMed:7926739). Regulates the frequency of trichome initiation and determines trichome spacing (PubMed:11844112). Acts as a negative factor for root hair development (PubMed:26486447, PubMed:8620852, PubMed:8811855). Required for ectopic repression of root hair development in a subset of epidermal cells (PubMed:8811855). May suppress hair formation in root epidermis by promoting differentiation into hairless epidermal cells (PubMed:8620852). Directly suppresses the bHLH transcription factor genes, RHD6, RSL1, RSL2, LRL1, and LRL2, which have diverse functions in root hair development (PubMed:26486447). Required for normal development of seed coat mucilage (PubMed:21883555, PubMed:7926739). Involved in the control of seed oil accumulation (PubMed:16514561, PubMed:21883555). Acts as a negative regulator of anthocyanin biosynthesis (PubMed:26017690). May directly repress the expression of some component genes from the MYB-bHLH-WD40 (MBW) transcriptional activator complex (PubMed:26017690). The MBW complex activates the transcription of late biosynthesis genes in the flavonoid pathway, leading to the production of anthocyanins (Probable).</text>
</comment>
<comment type="subunit">
    <text evidence="11">Interacts with GIR1 and GIR2.</text>
</comment>
<comment type="subcellular location">
    <subcellularLocation>
        <location evidence="11">Nucleus</location>
    </subcellularLocation>
</comment>
<comment type="alternative products">
    <event type="alternative splicing"/>
    <isoform>
        <id>P46607-1</id>
        <name>1</name>
        <sequence type="displayed"/>
    </isoform>
    <text>A number of isoforms are produced. According to EST sequences.</text>
</comment>
<comment type="tissue specificity">
    <text evidence="12 13">Expressed in individual developing trichome cells of the emerging leaf primordia (PubMed:7926739). Expressed in differentiating hairless cells of root epidermis (PubMed:8620852).</text>
</comment>
<comment type="induction">
    <text evidence="7">Down-regulated by GEM.</text>
</comment>
<comment type="disruption phenotype">
    <text evidence="6 8 11 12 13 14">Defect in trichome development (PubMed:28526410, PubMed:7926739). Defect in accumulation of seed coat mucilage (PubMed:21883555, PubMed:7926739). Excessive root hair formation (PubMed:28526410, PubMed:8620852, PubMed:8811855). High seed oil content phenotype (PubMed:16514561, PubMed:21883555).</text>
</comment>
<comment type="miscellaneous">
    <text evidence="9">The gain-of-function gl2-1D mutants (T-DNA tagging) exhibit reduced endogenous levels of anthocyanins.</text>
</comment>
<comment type="similarity">
    <text evidence="17">Belongs to the HD-ZIP homeobox family. Class IV subfamily.</text>
</comment>
<comment type="sequence caution" evidence="17">
    <conflict type="erroneous initiation">
        <sequence resource="EMBL-CDS" id="AAC80260"/>
    </conflict>
    <text>Truncated N-terminus.</text>
</comment>
<comment type="sequence caution" evidence="17">
    <conflict type="erroneous initiation">
        <sequence resource="EMBL-CDS" id="AAG52245"/>
    </conflict>
    <text>Truncated N-terminus.</text>
</comment>
<organism>
    <name type="scientific">Arabidopsis thaliana</name>
    <name type="common">Mouse-ear cress</name>
    <dbReference type="NCBI Taxonomy" id="3702"/>
    <lineage>
        <taxon>Eukaryota</taxon>
        <taxon>Viridiplantae</taxon>
        <taxon>Streptophyta</taxon>
        <taxon>Embryophyta</taxon>
        <taxon>Tracheophyta</taxon>
        <taxon>Spermatophyta</taxon>
        <taxon>Magnoliopsida</taxon>
        <taxon>eudicotyledons</taxon>
        <taxon>Gunneridae</taxon>
        <taxon>Pentapetalae</taxon>
        <taxon>rosids</taxon>
        <taxon>malvids</taxon>
        <taxon>Brassicales</taxon>
        <taxon>Brassicaceae</taxon>
        <taxon>Camelineae</taxon>
        <taxon>Arabidopsis</taxon>
    </lineage>
</organism>
<protein>
    <recommendedName>
        <fullName evidence="17">Homeobox-leucine zipper protein GLABRA 2</fullName>
        <shortName evidence="15">Protein GLABRA2</shortName>
    </recommendedName>
    <alternativeName>
        <fullName evidence="17">HD-ZIP protein ATHB-10</fullName>
    </alternativeName>
    <alternativeName>
        <fullName evidence="17">Homeobox-leucine zipper protein ATHB-10</fullName>
    </alternativeName>
</protein>
<keyword id="KW-0025">Alternative splicing</keyword>
<keyword id="KW-0175">Coiled coil</keyword>
<keyword id="KW-0238">DNA-binding</keyword>
<keyword id="KW-0371">Homeobox</keyword>
<keyword id="KW-0539">Nucleus</keyword>
<keyword id="KW-1185">Reference proteome</keyword>
<keyword id="KW-0804">Transcription</keyword>
<keyword id="KW-0805">Transcription regulation</keyword>
<name>HGL2_ARATH</name>
<evidence type="ECO:0000255" key="1"/>
<evidence type="ECO:0000255" key="2">
    <source>
        <dbReference type="PROSITE-ProRule" id="PRU00108"/>
    </source>
</evidence>
<evidence type="ECO:0000255" key="3">
    <source>
        <dbReference type="PROSITE-ProRule" id="PRU00197"/>
    </source>
</evidence>
<evidence type="ECO:0000256" key="4">
    <source>
        <dbReference type="SAM" id="MobiDB-lite"/>
    </source>
</evidence>
<evidence type="ECO:0000269" key="5">
    <source>
    </source>
</evidence>
<evidence type="ECO:0000269" key="6">
    <source>
    </source>
</evidence>
<evidence type="ECO:0000269" key="7">
    <source>
    </source>
</evidence>
<evidence type="ECO:0000269" key="8">
    <source>
    </source>
</evidence>
<evidence type="ECO:0000269" key="9">
    <source>
    </source>
</evidence>
<evidence type="ECO:0000269" key="10">
    <source>
    </source>
</evidence>
<evidence type="ECO:0000269" key="11">
    <source>
    </source>
</evidence>
<evidence type="ECO:0000269" key="12">
    <source>
    </source>
</evidence>
<evidence type="ECO:0000269" key="13">
    <source>
    </source>
</evidence>
<evidence type="ECO:0000269" key="14">
    <source>
    </source>
</evidence>
<evidence type="ECO:0000303" key="15">
    <source>
    </source>
</evidence>
<evidence type="ECO:0000303" key="16">
    <source>
    </source>
</evidence>
<evidence type="ECO:0000305" key="17"/>
<evidence type="ECO:0000305" key="18">
    <source>
    </source>
</evidence>
<evidence type="ECO:0000305" key="19">
    <source>
    </source>
</evidence>
<evidence type="ECO:0000305" key="20">
    <source>
    </source>
</evidence>
<evidence type="ECO:0000312" key="21">
    <source>
        <dbReference type="Araport" id="AT1G79840"/>
    </source>
</evidence>
<evidence type="ECO:0000312" key="22">
    <source>
        <dbReference type="EMBL" id="AAG52245.1"/>
    </source>
</evidence>
<proteinExistence type="evidence at protein level"/>
<dbReference type="EMBL" id="L32873">
    <property type="protein sequence ID" value="AAC80260.1"/>
    <property type="status" value="ALT_INIT"/>
    <property type="molecule type" value="Genomic_DNA"/>
</dbReference>
<dbReference type="EMBL" id="Z54356">
    <property type="protein sequence ID" value="CAA91183.1"/>
    <property type="molecule type" value="Genomic_DNA"/>
</dbReference>
<dbReference type="EMBL" id="AJ457046">
    <property type="protein sequence ID" value="CAD29714.1"/>
    <property type="molecule type" value="mRNA"/>
</dbReference>
<dbReference type="EMBL" id="AC011717">
    <property type="protein sequence ID" value="AAG52245.1"/>
    <property type="status" value="ALT_INIT"/>
    <property type="molecule type" value="Genomic_DNA"/>
</dbReference>
<dbReference type="EMBL" id="CP002684">
    <property type="protein sequence ID" value="AEE36311.1"/>
    <property type="molecule type" value="Genomic_DNA"/>
</dbReference>
<dbReference type="EMBL" id="AF360294">
    <property type="protein sequence ID" value="AAK26004.1"/>
    <property type="molecule type" value="mRNA"/>
</dbReference>
<dbReference type="EMBL" id="BT001956">
    <property type="protein sequence ID" value="AAN71955.1"/>
    <property type="molecule type" value="mRNA"/>
</dbReference>
<dbReference type="PIR" id="D96829">
    <property type="entry name" value="D96829"/>
</dbReference>
<dbReference type="PIR" id="S71478">
    <property type="entry name" value="S71478"/>
</dbReference>
<dbReference type="RefSeq" id="NP_565223.1">
    <molecule id="P46607-1"/>
    <property type="nucleotide sequence ID" value="NM_106633.2"/>
</dbReference>
<dbReference type="SMR" id="P46607"/>
<dbReference type="BioGRID" id="29541">
    <property type="interactions" value="5"/>
</dbReference>
<dbReference type="FunCoup" id="P46607">
    <property type="interactions" value="235"/>
</dbReference>
<dbReference type="IntAct" id="P46607">
    <property type="interactions" value="1"/>
</dbReference>
<dbReference type="STRING" id="3702.P46607"/>
<dbReference type="iPTMnet" id="P46607"/>
<dbReference type="PaxDb" id="3702-AT1G79840.2"/>
<dbReference type="ProteomicsDB" id="230236">
    <molecule id="P46607-1"/>
</dbReference>
<dbReference type="EnsemblPlants" id="AT1G79840.1">
    <molecule id="P46607-1"/>
    <property type="protein sequence ID" value="AT1G79840.1"/>
    <property type="gene ID" value="AT1G79840"/>
</dbReference>
<dbReference type="GeneID" id="844323"/>
<dbReference type="Gramene" id="AT1G79840.1">
    <molecule id="P46607-1"/>
    <property type="protein sequence ID" value="AT1G79840.1"/>
    <property type="gene ID" value="AT1G79840"/>
</dbReference>
<dbReference type="KEGG" id="ath:AT1G79840"/>
<dbReference type="Araport" id="AT1G79840"/>
<dbReference type="TAIR" id="AT1G79840">
    <property type="gene designation" value="GL2"/>
</dbReference>
<dbReference type="eggNOG" id="ENOG502QUI1">
    <property type="taxonomic scope" value="Eukaryota"/>
</dbReference>
<dbReference type="HOGENOM" id="CLU_015002_2_1_1"/>
<dbReference type="InParanoid" id="P46607"/>
<dbReference type="PhylomeDB" id="P46607"/>
<dbReference type="PRO" id="PR:P46607"/>
<dbReference type="Proteomes" id="UP000006548">
    <property type="component" value="Chromosome 1"/>
</dbReference>
<dbReference type="ExpressionAtlas" id="P46607">
    <property type="expression patterns" value="baseline and differential"/>
</dbReference>
<dbReference type="GO" id="GO:0005634">
    <property type="term" value="C:nucleus"/>
    <property type="evidence" value="ECO:0007669"/>
    <property type="project" value="UniProtKB-SubCell"/>
</dbReference>
<dbReference type="GO" id="GO:0003677">
    <property type="term" value="F:DNA binding"/>
    <property type="evidence" value="ECO:0007669"/>
    <property type="project" value="UniProtKB-KW"/>
</dbReference>
<dbReference type="GO" id="GO:0000981">
    <property type="term" value="F:DNA-binding transcription factor activity, RNA polymerase II-specific"/>
    <property type="evidence" value="ECO:0007669"/>
    <property type="project" value="InterPro"/>
</dbReference>
<dbReference type="GO" id="GO:0008289">
    <property type="term" value="F:lipid binding"/>
    <property type="evidence" value="ECO:0007669"/>
    <property type="project" value="InterPro"/>
</dbReference>
<dbReference type="CDD" id="cd00086">
    <property type="entry name" value="homeodomain"/>
    <property type="match status" value="1"/>
</dbReference>
<dbReference type="CDD" id="cd08875">
    <property type="entry name" value="START_ArGLABRA2_like"/>
    <property type="match status" value="1"/>
</dbReference>
<dbReference type="FunFam" id="1.10.10.60:FF:000666">
    <property type="entry name" value="HD-ZIP IV family of homeobox-leucine zipper protein with lipid-binding START domain-containing protein"/>
    <property type="match status" value="1"/>
</dbReference>
<dbReference type="FunFam" id="3.30.530.20:FF:000026">
    <property type="entry name" value="Homeobox-leucine zipper protein GLABRA 2"/>
    <property type="match status" value="1"/>
</dbReference>
<dbReference type="Gene3D" id="3.30.530.20">
    <property type="match status" value="1"/>
</dbReference>
<dbReference type="Gene3D" id="1.10.10.60">
    <property type="entry name" value="Homeodomain-like"/>
    <property type="match status" value="1"/>
</dbReference>
<dbReference type="InterPro" id="IPR042160">
    <property type="entry name" value="GLABRA2/ANL2/PDF2/ATML1-like"/>
</dbReference>
<dbReference type="InterPro" id="IPR001356">
    <property type="entry name" value="HD"/>
</dbReference>
<dbReference type="InterPro" id="IPR017970">
    <property type="entry name" value="Homeobox_CS"/>
</dbReference>
<dbReference type="InterPro" id="IPR009057">
    <property type="entry name" value="Homeodomain-like_sf"/>
</dbReference>
<dbReference type="InterPro" id="IPR023393">
    <property type="entry name" value="START-like_dom_sf"/>
</dbReference>
<dbReference type="InterPro" id="IPR002913">
    <property type="entry name" value="START_lipid-bd_dom"/>
</dbReference>
<dbReference type="PANTHER" id="PTHR45654:SF24">
    <property type="entry name" value="HOMEOBOX-LEUCINE ZIPPER PROTEIN GLABRA 2"/>
    <property type="match status" value="1"/>
</dbReference>
<dbReference type="PANTHER" id="PTHR45654">
    <property type="entry name" value="HOMEOBOX-LEUCINE ZIPPER PROTEIN MERISTEM L1"/>
    <property type="match status" value="1"/>
</dbReference>
<dbReference type="Pfam" id="PF00046">
    <property type="entry name" value="Homeodomain"/>
    <property type="match status" value="1"/>
</dbReference>
<dbReference type="Pfam" id="PF01852">
    <property type="entry name" value="START"/>
    <property type="match status" value="1"/>
</dbReference>
<dbReference type="SMART" id="SM00389">
    <property type="entry name" value="HOX"/>
    <property type="match status" value="1"/>
</dbReference>
<dbReference type="SMART" id="SM00234">
    <property type="entry name" value="START"/>
    <property type="match status" value="1"/>
</dbReference>
<dbReference type="SUPFAM" id="SSF55961">
    <property type="entry name" value="Bet v1-like"/>
    <property type="match status" value="2"/>
</dbReference>
<dbReference type="SUPFAM" id="SSF46689">
    <property type="entry name" value="Homeodomain-like"/>
    <property type="match status" value="1"/>
</dbReference>
<dbReference type="PROSITE" id="PS00027">
    <property type="entry name" value="HOMEOBOX_1"/>
    <property type="match status" value="1"/>
</dbReference>
<dbReference type="PROSITE" id="PS50071">
    <property type="entry name" value="HOMEOBOX_2"/>
    <property type="match status" value="1"/>
</dbReference>
<dbReference type="PROSITE" id="PS50848">
    <property type="entry name" value="START"/>
    <property type="match status" value="1"/>
</dbReference>